<feature type="initiator methionine" description="Removed" evidence="2">
    <location>
        <position position="1"/>
    </location>
</feature>
<feature type="chain" id="PRO_0000079442" description="Regulation of nuclear pre-mRNA domain-containing protein 1B">
    <location>
        <begin position="2"/>
        <end position="326"/>
    </location>
</feature>
<feature type="domain" description="CID" evidence="3">
    <location>
        <begin position="2"/>
        <end position="133"/>
    </location>
</feature>
<feature type="region of interest" description="Disordered" evidence="4">
    <location>
        <begin position="128"/>
        <end position="148"/>
    </location>
</feature>
<feature type="compositionally biased region" description="Basic and acidic residues" evidence="4">
    <location>
        <begin position="128"/>
        <end position="144"/>
    </location>
</feature>
<feature type="modified residue" description="N-acetylserine" evidence="2">
    <location>
        <position position="2"/>
    </location>
</feature>
<feature type="modified residue" description="Phosphoserine" evidence="2">
    <location>
        <position position="132"/>
    </location>
</feature>
<feature type="modified residue" description="Phosphoserine" evidence="8 9">
    <location>
        <position position="134"/>
    </location>
</feature>
<feature type="modified residue" description="Phosphotyrosine" evidence="2">
    <location>
        <position position="161"/>
    </location>
</feature>
<feature type="modified residue" description="Phosphoserine" evidence="9">
    <location>
        <position position="166"/>
    </location>
</feature>
<feature type="modified residue" description="Phosphoserine" evidence="1">
    <location>
        <position position="299"/>
    </location>
</feature>
<feature type="splice variant" id="VSP_035576" description="In isoform 3." evidence="7">
    <original>KEAAE</original>
    <variation>AETEA</variation>
    <location>
        <begin position="220"/>
        <end position="224"/>
    </location>
</feature>
<feature type="splice variant" id="VSP_035577" description="In isoform 3." evidence="7">
    <location>
        <begin position="225"/>
        <end position="326"/>
    </location>
</feature>
<feature type="splice variant" id="VSP_018618" description="In isoform 2." evidence="6">
    <original>EYKQKLARVTQVRKELK</original>
    <variation>RLTQQLQPCSDPQNVSF</variation>
    <location>
        <begin position="278"/>
        <end position="294"/>
    </location>
</feature>
<feature type="splice variant" id="VSP_018619" description="In isoform 2." evidence="6">
    <location>
        <begin position="295"/>
        <end position="326"/>
    </location>
</feature>
<feature type="sequence conflict" description="In Ref. 4; BAE30966/BAE31047." evidence="7" ref="4">
    <original>S</original>
    <variation>G</variation>
    <location>
        <position position="17"/>
    </location>
</feature>
<feature type="sequence conflict" description="In Ref. 2; BAB27954/BAE28092/BAE28237, 3; CAM23183/CAM23185 and 4; AAH42447/AAH54350." evidence="7" ref="2 3 4">
    <location>
        <position position="139"/>
    </location>
</feature>
<feature type="sequence conflict" description="In Ref. 2; BAE24207." evidence="7" ref="2">
    <original>QEVQDVSLLEKITDKEA</original>
    <variation>SGSARRVAARENYRCRN</variation>
    <location>
        <begin position="206"/>
        <end position="222"/>
    </location>
</feature>
<feature type="sequence conflict" description="In Ref. 2; BAE24207." evidence="7" ref="2">
    <location>
        <begin position="223"/>
        <end position="326"/>
    </location>
</feature>
<feature type="sequence conflict" description="In Ref. 2; BAB27954." evidence="7" ref="2">
    <original>S</original>
    <variation>P</variation>
    <location>
        <position position="270"/>
    </location>
</feature>
<feature type="sequence conflict" description="In Ref. 2; BAE28092/BAE28237." evidence="7" ref="2">
    <original>P</original>
    <variation>S</variation>
    <location>
        <position position="317"/>
    </location>
</feature>
<comment type="function">
    <text evidence="2">Interacts with phosphorylated C-terminal heptapeptide repeat domain (CTD) of the largest RNA polymerase II subunit POLR2A, and participates in dephosphorylation of the CTD by RPAP2. Transcriptional regulator which enhances expression of CCND1. Promotes binding of RNA polymerase II to the CCDN1 promoter and to the termination region before the poly-A site but decreases its binding after the poly-A site. Prevents RNA polymerase II from reading through the 3' end termination site and may allow it to be recruited back to the promoter through promotion of the formation of a chromatin loop. Also enhances the transcription of a number of other cell cycle-related genes including CDK2, CDK4, CDK6 and cyclin-E but not CDKN1A, CDKN1B or cyclin-A. Promotes cell proliferation.</text>
</comment>
<comment type="subunit">
    <text evidence="2">Homodimer. May form a heterodimer with RPRD1A. Associates with RPAP2. Associates with the RNA polymerase II complex.</text>
</comment>
<comment type="subcellular location">
    <subcellularLocation>
        <location evidence="2">Nucleus</location>
    </subcellularLocation>
</comment>
<comment type="alternative products">
    <event type="alternative splicing"/>
    <isoform>
        <id>Q9CSU0-1</id>
        <name>1</name>
        <sequence type="displayed"/>
    </isoform>
    <isoform>
        <id>Q9CSU0-2</id>
        <name>2</name>
        <sequence type="described" ref="VSP_018618 VSP_018619"/>
    </isoform>
    <isoform>
        <id>Q9CSU0-3</id>
        <name>3</name>
        <sequence type="described" ref="VSP_035576 VSP_035577"/>
    </isoform>
</comment>
<comment type="tissue specificity">
    <text evidence="5">Widely expressed in the adult with highest levels in liver, colon, prostate and uterus and lowest levels in heart and kidney. Not detected in rectum.</text>
</comment>
<comment type="developmental stage">
    <text evidence="5">Highly expressed during early embryonic development (at protein level). Low levels detected in the adult.</text>
</comment>
<comment type="similarity">
    <text evidence="7">Belongs to the UPF0400 (RTT103) family.</text>
</comment>
<proteinExistence type="evidence at protein level"/>
<evidence type="ECO:0000250" key="1">
    <source>
        <dbReference type="UniProtKB" id="Q96P16"/>
    </source>
</evidence>
<evidence type="ECO:0000250" key="2">
    <source>
        <dbReference type="UniProtKB" id="Q9NQG5"/>
    </source>
</evidence>
<evidence type="ECO:0000255" key="3">
    <source>
        <dbReference type="PROSITE-ProRule" id="PRU00724"/>
    </source>
</evidence>
<evidence type="ECO:0000256" key="4">
    <source>
        <dbReference type="SAM" id="MobiDB-lite"/>
    </source>
</evidence>
<evidence type="ECO:0000269" key="5">
    <source>
    </source>
</evidence>
<evidence type="ECO:0000303" key="6">
    <source>
    </source>
</evidence>
<evidence type="ECO:0000305" key="7"/>
<evidence type="ECO:0007744" key="8">
    <source>
    </source>
</evidence>
<evidence type="ECO:0007744" key="9">
    <source>
    </source>
</evidence>
<name>RPR1B_MOUSE</name>
<accession>Q9CSU0</accession>
<accession>A2ACF2</accession>
<accession>A2ACF4</accession>
<accession>A2ACF5</accession>
<accession>A2ACF6</accession>
<accession>Q1WDE6</accession>
<accession>Q3U8H1</accession>
<accession>Q3UGH1</accession>
<accession>Q3USX3</accession>
<accession>Q6GTJ6</accession>
<gene>
    <name type="primary">Rprd1b</name>
    <name type="synonym">Crept</name>
</gene>
<organism>
    <name type="scientific">Mus musculus</name>
    <name type="common">Mouse</name>
    <dbReference type="NCBI Taxonomy" id="10090"/>
    <lineage>
        <taxon>Eukaryota</taxon>
        <taxon>Metazoa</taxon>
        <taxon>Chordata</taxon>
        <taxon>Craniata</taxon>
        <taxon>Vertebrata</taxon>
        <taxon>Euteleostomi</taxon>
        <taxon>Mammalia</taxon>
        <taxon>Eutheria</taxon>
        <taxon>Euarchontoglires</taxon>
        <taxon>Glires</taxon>
        <taxon>Rodentia</taxon>
        <taxon>Myomorpha</taxon>
        <taxon>Muroidea</taxon>
        <taxon>Muridae</taxon>
        <taxon>Murinae</taxon>
        <taxon>Mus</taxon>
        <taxon>Mus</taxon>
    </lineage>
</organism>
<keyword id="KW-0007">Acetylation</keyword>
<keyword id="KW-0025">Alternative splicing</keyword>
<keyword id="KW-0539">Nucleus</keyword>
<keyword id="KW-0597">Phosphoprotein</keyword>
<keyword id="KW-1185">Reference proteome</keyword>
<keyword id="KW-0804">Transcription</keyword>
<keyword id="KW-0805">Transcription regulation</keyword>
<reference key="1">
    <citation type="journal article" date="2012" name="Cancer Cell">
        <title>CREPT accelerates tumorigenesis by regulating the transcription of cell-cycle-related genes.</title>
        <authorList>
            <person name="Lu D."/>
            <person name="Wu Y."/>
            <person name="Wang Y."/>
            <person name="Ren F."/>
            <person name="Wang D."/>
            <person name="Su F."/>
            <person name="Zhang Y."/>
            <person name="Yang X."/>
            <person name="Jin G."/>
            <person name="Hao X."/>
            <person name="He D."/>
            <person name="Zhai Y."/>
            <person name="Irwin D.M."/>
            <person name="Hu J."/>
            <person name="Sung J.J."/>
            <person name="Yu J."/>
            <person name="Jia B."/>
            <person name="Chang Z."/>
        </authorList>
    </citation>
    <scope>NUCLEOTIDE SEQUENCE [MRNA] (ISOFORM 1)</scope>
    <scope>TISSUE SPECIFICITY</scope>
    <scope>DEVELOPMENTAL STAGE</scope>
    <source>
        <strain>BALB/cJ</strain>
    </source>
</reference>
<reference key="2">
    <citation type="journal article" date="2005" name="Science">
        <title>The transcriptional landscape of the mammalian genome.</title>
        <authorList>
            <person name="Carninci P."/>
            <person name="Kasukawa T."/>
            <person name="Katayama S."/>
            <person name="Gough J."/>
            <person name="Frith M.C."/>
            <person name="Maeda N."/>
            <person name="Oyama R."/>
            <person name="Ravasi T."/>
            <person name="Lenhard B."/>
            <person name="Wells C."/>
            <person name="Kodzius R."/>
            <person name="Shimokawa K."/>
            <person name="Bajic V.B."/>
            <person name="Brenner S.E."/>
            <person name="Batalov S."/>
            <person name="Forrest A.R."/>
            <person name="Zavolan M."/>
            <person name="Davis M.J."/>
            <person name="Wilming L.G."/>
            <person name="Aidinis V."/>
            <person name="Allen J.E."/>
            <person name="Ambesi-Impiombato A."/>
            <person name="Apweiler R."/>
            <person name="Aturaliya R.N."/>
            <person name="Bailey T.L."/>
            <person name="Bansal M."/>
            <person name="Baxter L."/>
            <person name="Beisel K.W."/>
            <person name="Bersano T."/>
            <person name="Bono H."/>
            <person name="Chalk A.M."/>
            <person name="Chiu K.P."/>
            <person name="Choudhary V."/>
            <person name="Christoffels A."/>
            <person name="Clutterbuck D.R."/>
            <person name="Crowe M.L."/>
            <person name="Dalla E."/>
            <person name="Dalrymple B.P."/>
            <person name="de Bono B."/>
            <person name="Della Gatta G."/>
            <person name="di Bernardo D."/>
            <person name="Down T."/>
            <person name="Engstrom P."/>
            <person name="Fagiolini M."/>
            <person name="Faulkner G."/>
            <person name="Fletcher C.F."/>
            <person name="Fukushima T."/>
            <person name="Furuno M."/>
            <person name="Futaki S."/>
            <person name="Gariboldi M."/>
            <person name="Georgii-Hemming P."/>
            <person name="Gingeras T.R."/>
            <person name="Gojobori T."/>
            <person name="Green R.E."/>
            <person name="Gustincich S."/>
            <person name="Harbers M."/>
            <person name="Hayashi Y."/>
            <person name="Hensch T.K."/>
            <person name="Hirokawa N."/>
            <person name="Hill D."/>
            <person name="Huminiecki L."/>
            <person name="Iacono M."/>
            <person name="Ikeo K."/>
            <person name="Iwama A."/>
            <person name="Ishikawa T."/>
            <person name="Jakt M."/>
            <person name="Kanapin A."/>
            <person name="Katoh M."/>
            <person name="Kawasawa Y."/>
            <person name="Kelso J."/>
            <person name="Kitamura H."/>
            <person name="Kitano H."/>
            <person name="Kollias G."/>
            <person name="Krishnan S.P."/>
            <person name="Kruger A."/>
            <person name="Kummerfeld S.K."/>
            <person name="Kurochkin I.V."/>
            <person name="Lareau L.F."/>
            <person name="Lazarevic D."/>
            <person name="Lipovich L."/>
            <person name="Liu J."/>
            <person name="Liuni S."/>
            <person name="McWilliam S."/>
            <person name="Madan Babu M."/>
            <person name="Madera M."/>
            <person name="Marchionni L."/>
            <person name="Matsuda H."/>
            <person name="Matsuzawa S."/>
            <person name="Miki H."/>
            <person name="Mignone F."/>
            <person name="Miyake S."/>
            <person name="Morris K."/>
            <person name="Mottagui-Tabar S."/>
            <person name="Mulder N."/>
            <person name="Nakano N."/>
            <person name="Nakauchi H."/>
            <person name="Ng P."/>
            <person name="Nilsson R."/>
            <person name="Nishiguchi S."/>
            <person name="Nishikawa S."/>
            <person name="Nori F."/>
            <person name="Ohara O."/>
            <person name="Okazaki Y."/>
            <person name="Orlando V."/>
            <person name="Pang K.C."/>
            <person name="Pavan W.J."/>
            <person name="Pavesi G."/>
            <person name="Pesole G."/>
            <person name="Petrovsky N."/>
            <person name="Piazza S."/>
            <person name="Reed J."/>
            <person name="Reid J.F."/>
            <person name="Ring B.Z."/>
            <person name="Ringwald M."/>
            <person name="Rost B."/>
            <person name="Ruan Y."/>
            <person name="Salzberg S.L."/>
            <person name="Sandelin A."/>
            <person name="Schneider C."/>
            <person name="Schoenbach C."/>
            <person name="Sekiguchi K."/>
            <person name="Semple C.A."/>
            <person name="Seno S."/>
            <person name="Sessa L."/>
            <person name="Sheng Y."/>
            <person name="Shibata Y."/>
            <person name="Shimada H."/>
            <person name="Shimada K."/>
            <person name="Silva D."/>
            <person name="Sinclair B."/>
            <person name="Sperling S."/>
            <person name="Stupka E."/>
            <person name="Sugiura K."/>
            <person name="Sultana R."/>
            <person name="Takenaka Y."/>
            <person name="Taki K."/>
            <person name="Tammoja K."/>
            <person name="Tan S.L."/>
            <person name="Tang S."/>
            <person name="Taylor M.S."/>
            <person name="Tegner J."/>
            <person name="Teichmann S.A."/>
            <person name="Ueda H.R."/>
            <person name="van Nimwegen E."/>
            <person name="Verardo R."/>
            <person name="Wei C.L."/>
            <person name="Yagi K."/>
            <person name="Yamanishi H."/>
            <person name="Zabarovsky E."/>
            <person name="Zhu S."/>
            <person name="Zimmer A."/>
            <person name="Hide W."/>
            <person name="Bult C."/>
            <person name="Grimmond S.M."/>
            <person name="Teasdale R.D."/>
            <person name="Liu E.T."/>
            <person name="Brusic V."/>
            <person name="Quackenbush J."/>
            <person name="Wahlestedt C."/>
            <person name="Mattick J.S."/>
            <person name="Hume D.A."/>
            <person name="Kai C."/>
            <person name="Sasaki D."/>
            <person name="Tomaru Y."/>
            <person name="Fukuda S."/>
            <person name="Kanamori-Katayama M."/>
            <person name="Suzuki M."/>
            <person name="Aoki J."/>
            <person name="Arakawa T."/>
            <person name="Iida J."/>
            <person name="Imamura K."/>
            <person name="Itoh M."/>
            <person name="Kato T."/>
            <person name="Kawaji H."/>
            <person name="Kawagashira N."/>
            <person name="Kawashima T."/>
            <person name="Kojima M."/>
            <person name="Kondo S."/>
            <person name="Konno H."/>
            <person name="Nakano K."/>
            <person name="Ninomiya N."/>
            <person name="Nishio T."/>
            <person name="Okada M."/>
            <person name="Plessy C."/>
            <person name="Shibata K."/>
            <person name="Shiraki T."/>
            <person name="Suzuki S."/>
            <person name="Tagami M."/>
            <person name="Waki K."/>
            <person name="Watahiki A."/>
            <person name="Okamura-Oho Y."/>
            <person name="Suzuki H."/>
            <person name="Kawai J."/>
            <person name="Hayashizaki Y."/>
        </authorList>
    </citation>
    <scope>NUCLEOTIDE SEQUENCE [LARGE SCALE MRNA] (ISOFORMS 1 AND 2)</scope>
    <source>
        <strain>C57BL/6J</strain>
        <tissue>Bone marrow macrophage</tissue>
        <tissue>Corpora quadrigemina</tissue>
        <tissue>Embryo</tissue>
        <tissue>Melanocyte</tissue>
    </source>
</reference>
<reference key="3">
    <citation type="journal article" date="2009" name="PLoS Biol.">
        <title>Lineage-specific biology revealed by a finished genome assembly of the mouse.</title>
        <authorList>
            <person name="Church D.M."/>
            <person name="Goodstadt L."/>
            <person name="Hillier L.W."/>
            <person name="Zody M.C."/>
            <person name="Goldstein S."/>
            <person name="She X."/>
            <person name="Bult C.J."/>
            <person name="Agarwala R."/>
            <person name="Cherry J.L."/>
            <person name="DiCuccio M."/>
            <person name="Hlavina W."/>
            <person name="Kapustin Y."/>
            <person name="Meric P."/>
            <person name="Maglott D."/>
            <person name="Birtle Z."/>
            <person name="Marques A.C."/>
            <person name="Graves T."/>
            <person name="Zhou S."/>
            <person name="Teague B."/>
            <person name="Potamousis K."/>
            <person name="Churas C."/>
            <person name="Place M."/>
            <person name="Herschleb J."/>
            <person name="Runnheim R."/>
            <person name="Forrest D."/>
            <person name="Amos-Landgraf J."/>
            <person name="Schwartz D.C."/>
            <person name="Cheng Z."/>
            <person name="Lindblad-Toh K."/>
            <person name="Eichler E.E."/>
            <person name="Ponting C.P."/>
        </authorList>
    </citation>
    <scope>NUCLEOTIDE SEQUENCE [LARGE SCALE GENOMIC DNA]</scope>
    <source>
        <strain>C57BL/6J</strain>
    </source>
</reference>
<reference key="4">
    <citation type="journal article" date="2004" name="Genome Res.">
        <title>The status, quality, and expansion of the NIH full-length cDNA project: the Mammalian Gene Collection (MGC).</title>
        <authorList>
            <consortium name="The MGC Project Team"/>
        </authorList>
    </citation>
    <scope>NUCLEOTIDE SEQUENCE [LARGE SCALE MRNA] (ISOFORM 1)</scope>
    <source>
        <strain>C57BL/6J</strain>
        <strain>FVB/N</strain>
        <tissue>Liver</tissue>
        <tissue>Mammary gland</tissue>
        <tissue>Retina</tissue>
    </source>
</reference>
<reference key="5">
    <citation type="journal article" date="2004" name="Mol. Cell. Proteomics">
        <title>Phosphoproteomic analysis of the developing mouse brain.</title>
        <authorList>
            <person name="Ballif B.A."/>
            <person name="Villen J."/>
            <person name="Beausoleil S.A."/>
            <person name="Schwartz D."/>
            <person name="Gygi S.P."/>
        </authorList>
    </citation>
    <scope>IDENTIFICATION BY MASS SPECTROMETRY [LARGE SCALE ANALYSIS]</scope>
    <source>
        <tissue>Embryonic brain</tissue>
    </source>
</reference>
<reference key="6">
    <citation type="journal article" date="2009" name="Immunity">
        <title>The phagosomal proteome in interferon-gamma-activated macrophages.</title>
        <authorList>
            <person name="Trost M."/>
            <person name="English L."/>
            <person name="Lemieux S."/>
            <person name="Courcelles M."/>
            <person name="Desjardins M."/>
            <person name="Thibault P."/>
        </authorList>
    </citation>
    <scope>PHOSPHORYLATION [LARGE SCALE ANALYSIS] AT SER-134</scope>
    <scope>IDENTIFICATION BY MASS SPECTROMETRY [LARGE SCALE ANALYSIS]</scope>
</reference>
<reference key="7">
    <citation type="journal article" date="2010" name="Cell">
        <title>A tissue-specific atlas of mouse protein phosphorylation and expression.</title>
        <authorList>
            <person name="Huttlin E.L."/>
            <person name="Jedrychowski M.P."/>
            <person name="Elias J.E."/>
            <person name="Goswami T."/>
            <person name="Rad R."/>
            <person name="Beausoleil S.A."/>
            <person name="Villen J."/>
            <person name="Haas W."/>
            <person name="Sowa M.E."/>
            <person name="Gygi S.P."/>
        </authorList>
    </citation>
    <scope>PHOSPHORYLATION [LARGE SCALE ANALYSIS] AT SER-134 AND SER-166</scope>
    <scope>IDENTIFICATION BY MASS SPECTROMETRY [LARGE SCALE ANALYSIS]</scope>
    <source>
        <tissue>Brain</tissue>
        <tissue>Heart</tissue>
        <tissue>Kidney</tissue>
        <tissue>Liver</tissue>
        <tissue>Lung</tissue>
        <tissue>Pancreas</tissue>
        <tissue>Spleen</tissue>
        <tissue>Testis</tissue>
    </source>
</reference>
<dbReference type="EMBL" id="DQ372939">
    <property type="protein sequence ID" value="ABD34792.1"/>
    <property type="molecule type" value="mRNA"/>
</dbReference>
<dbReference type="EMBL" id="AK011979">
    <property type="protein sequence ID" value="BAB27954.3"/>
    <property type="molecule type" value="mRNA"/>
</dbReference>
<dbReference type="EMBL" id="AK139995">
    <property type="protein sequence ID" value="BAE24207.1"/>
    <property type="molecule type" value="mRNA"/>
</dbReference>
<dbReference type="EMBL" id="AK147718">
    <property type="protein sequence ID" value="BAE28092.1"/>
    <property type="molecule type" value="mRNA"/>
</dbReference>
<dbReference type="EMBL" id="AK147930">
    <property type="protein sequence ID" value="BAE28237.1"/>
    <property type="molecule type" value="mRNA"/>
</dbReference>
<dbReference type="EMBL" id="AK152125">
    <property type="protein sequence ID" value="BAE30966.1"/>
    <property type="molecule type" value="mRNA"/>
</dbReference>
<dbReference type="EMBL" id="AK152220">
    <property type="protein sequence ID" value="BAE31047.1"/>
    <property type="molecule type" value="mRNA"/>
</dbReference>
<dbReference type="EMBL" id="AL669824">
    <property type="protein sequence ID" value="CAM23181.1"/>
    <property type="molecule type" value="Genomic_DNA"/>
</dbReference>
<dbReference type="EMBL" id="AL669824">
    <property type="protein sequence ID" value="CAM23182.1"/>
    <property type="molecule type" value="Genomic_DNA"/>
</dbReference>
<dbReference type="EMBL" id="AL669824">
    <property type="protein sequence ID" value="CAM23183.1"/>
    <property type="molecule type" value="Genomic_DNA"/>
</dbReference>
<dbReference type="EMBL" id="AL669824">
    <property type="protein sequence ID" value="CAM23184.1"/>
    <property type="molecule type" value="Genomic_DNA"/>
</dbReference>
<dbReference type="EMBL" id="AL669824">
    <property type="protein sequence ID" value="CAM23185.1"/>
    <property type="molecule type" value="Genomic_DNA"/>
</dbReference>
<dbReference type="EMBL" id="BC028819">
    <property type="protein sequence ID" value="AAH28819.3"/>
    <property type="molecule type" value="mRNA"/>
</dbReference>
<dbReference type="EMBL" id="BC042447">
    <property type="protein sequence ID" value="AAH42447.1"/>
    <property type="molecule type" value="mRNA"/>
</dbReference>
<dbReference type="EMBL" id="BC054350">
    <property type="protein sequence ID" value="AAH54350.1"/>
    <property type="molecule type" value="mRNA"/>
</dbReference>
<dbReference type="CCDS" id="CCDS71176.1">
    <molecule id="Q9CSU0-2"/>
</dbReference>
<dbReference type="CCDS" id="CCDS71177.1">
    <molecule id="Q9CSU0-1"/>
</dbReference>
<dbReference type="RefSeq" id="NP_001278063.1">
    <molecule id="Q9CSU0-1"/>
    <property type="nucleotide sequence ID" value="NM_001291134.1"/>
</dbReference>
<dbReference type="RefSeq" id="NP_001278064.1">
    <molecule id="Q9CSU0-2"/>
    <property type="nucleotide sequence ID" value="NM_001291135.1"/>
</dbReference>
<dbReference type="RefSeq" id="NP_001278065.1">
    <property type="nucleotide sequence ID" value="NM_001291136.1"/>
</dbReference>
<dbReference type="RefSeq" id="NP_081710.1">
    <property type="nucleotide sequence ID" value="NM_027434.3"/>
</dbReference>
<dbReference type="SMR" id="Q9CSU0"/>
<dbReference type="BioGRID" id="214076">
    <property type="interactions" value="50"/>
</dbReference>
<dbReference type="FunCoup" id="Q9CSU0">
    <property type="interactions" value="4141"/>
</dbReference>
<dbReference type="IntAct" id="Q9CSU0">
    <property type="interactions" value="34"/>
</dbReference>
<dbReference type="STRING" id="10090.ENSMUSP00000029180"/>
<dbReference type="iPTMnet" id="Q9CSU0"/>
<dbReference type="PhosphoSitePlus" id="Q9CSU0"/>
<dbReference type="jPOST" id="Q9CSU0"/>
<dbReference type="PaxDb" id="10090-ENSMUSP00000029180"/>
<dbReference type="PeptideAtlas" id="Q9CSU0"/>
<dbReference type="ProteomicsDB" id="299929">
    <molecule id="Q9CSU0-1"/>
</dbReference>
<dbReference type="ProteomicsDB" id="299930">
    <molecule id="Q9CSU0-2"/>
</dbReference>
<dbReference type="ProteomicsDB" id="299931">
    <molecule id="Q9CSU0-3"/>
</dbReference>
<dbReference type="Pumba" id="Q9CSU0"/>
<dbReference type="Antibodypedia" id="26806">
    <property type="antibodies" value="217 antibodies from 27 providers"/>
</dbReference>
<dbReference type="Ensembl" id="ENSMUST00000029180.14">
    <molecule id="Q9CSU0-1"/>
    <property type="protein sequence ID" value="ENSMUSP00000029180.8"/>
    <property type="gene ID" value="ENSMUSG00000027651.17"/>
</dbReference>
<dbReference type="Ensembl" id="ENSMUST00000109518.8">
    <molecule id="Q9CSU0-2"/>
    <property type="protein sequence ID" value="ENSMUSP00000105144.2"/>
    <property type="gene ID" value="ENSMUSG00000027651.17"/>
</dbReference>
<dbReference type="Ensembl" id="ENSMUST00000152452.8">
    <molecule id="Q9CSU0-3"/>
    <property type="protein sequence ID" value="ENSMUSP00000118434.2"/>
    <property type="gene ID" value="ENSMUSG00000027651.17"/>
</dbReference>
<dbReference type="GeneID" id="70470"/>
<dbReference type="KEGG" id="mmu:70470"/>
<dbReference type="UCSC" id="uc008npl.2">
    <molecule id="Q9CSU0-1"/>
    <property type="organism name" value="mouse"/>
</dbReference>
<dbReference type="UCSC" id="uc008npn.2">
    <molecule id="Q9CSU0-2"/>
    <property type="organism name" value="mouse"/>
</dbReference>
<dbReference type="AGR" id="MGI:1917720"/>
<dbReference type="CTD" id="58490"/>
<dbReference type="MGI" id="MGI:1917720">
    <property type="gene designation" value="Rprd1b"/>
</dbReference>
<dbReference type="VEuPathDB" id="HostDB:ENSMUSG00000027651"/>
<dbReference type="eggNOG" id="KOG2669">
    <property type="taxonomic scope" value="Eukaryota"/>
</dbReference>
<dbReference type="GeneTree" id="ENSGT00950000183094"/>
<dbReference type="HOGENOM" id="CLU_055523_0_0_1"/>
<dbReference type="InParanoid" id="Q9CSU0"/>
<dbReference type="OrthoDB" id="10069473at2759"/>
<dbReference type="PhylomeDB" id="Q9CSU0"/>
<dbReference type="TreeFam" id="TF320926"/>
<dbReference type="Reactome" id="R-MMU-6807505">
    <property type="pathway name" value="RNA polymerase II transcribes snRNA genes"/>
</dbReference>
<dbReference type="BioGRID-ORCS" id="70470">
    <property type="hits" value="19 hits in 78 CRISPR screens"/>
</dbReference>
<dbReference type="ChiTaRS" id="Rprd1b">
    <property type="organism name" value="mouse"/>
</dbReference>
<dbReference type="PRO" id="PR:Q9CSU0"/>
<dbReference type="Proteomes" id="UP000000589">
    <property type="component" value="Chromosome 2"/>
</dbReference>
<dbReference type="RNAct" id="Q9CSU0">
    <property type="molecule type" value="protein"/>
</dbReference>
<dbReference type="Bgee" id="ENSMUSG00000027651">
    <property type="expression patterns" value="Expressed in metanephric ureteric bud and 264 other cell types or tissues"/>
</dbReference>
<dbReference type="ExpressionAtlas" id="Q9CSU0">
    <property type="expression patterns" value="baseline and differential"/>
</dbReference>
<dbReference type="GO" id="GO:0005654">
    <property type="term" value="C:nucleoplasm"/>
    <property type="evidence" value="ECO:0007669"/>
    <property type="project" value="Ensembl"/>
</dbReference>
<dbReference type="GO" id="GO:0005634">
    <property type="term" value="C:nucleus"/>
    <property type="evidence" value="ECO:0000250"/>
    <property type="project" value="UniProtKB"/>
</dbReference>
<dbReference type="GO" id="GO:0097550">
    <property type="term" value="C:transcription preinitiation complex"/>
    <property type="evidence" value="ECO:0000250"/>
    <property type="project" value="UniProtKB"/>
</dbReference>
<dbReference type="GO" id="GO:0042802">
    <property type="term" value="F:identical protein binding"/>
    <property type="evidence" value="ECO:0007669"/>
    <property type="project" value="Ensembl"/>
</dbReference>
<dbReference type="GO" id="GO:0099122">
    <property type="term" value="F:RNA polymerase II C-terminal domain binding"/>
    <property type="evidence" value="ECO:0007669"/>
    <property type="project" value="InterPro"/>
</dbReference>
<dbReference type="GO" id="GO:0000993">
    <property type="term" value="F:RNA polymerase II complex binding"/>
    <property type="evidence" value="ECO:0000250"/>
    <property type="project" value="UniProtKB"/>
</dbReference>
<dbReference type="GO" id="GO:0008284">
    <property type="term" value="P:positive regulation of cell population proliferation"/>
    <property type="evidence" value="ECO:0000250"/>
    <property type="project" value="UniProtKB"/>
</dbReference>
<dbReference type="GO" id="GO:0045944">
    <property type="term" value="P:positive regulation of transcription by RNA polymerase II"/>
    <property type="evidence" value="ECO:0000250"/>
    <property type="project" value="UniProtKB"/>
</dbReference>
<dbReference type="GO" id="GO:0010564">
    <property type="term" value="P:regulation of cell cycle process"/>
    <property type="evidence" value="ECO:0000250"/>
    <property type="project" value="UniProtKB"/>
</dbReference>
<dbReference type="GO" id="GO:0001111">
    <property type="term" value="P:RNA polymerase II promoter clearance"/>
    <property type="evidence" value="ECO:0000250"/>
    <property type="project" value="UniProtKB"/>
</dbReference>
<dbReference type="CDD" id="cd17012">
    <property type="entry name" value="CID_RPRD1B"/>
    <property type="match status" value="1"/>
</dbReference>
<dbReference type="FunFam" id="1.25.40.90:FF:000007">
    <property type="entry name" value="Regulation of nuclear pre-mRNA domain-containing protein 1B"/>
    <property type="match status" value="1"/>
</dbReference>
<dbReference type="Gene3D" id="1.25.40.90">
    <property type="match status" value="1"/>
</dbReference>
<dbReference type="Gene3D" id="6.10.250.2560">
    <property type="match status" value="1"/>
</dbReference>
<dbReference type="InterPro" id="IPR006569">
    <property type="entry name" value="CID_dom"/>
</dbReference>
<dbReference type="InterPro" id="IPR008942">
    <property type="entry name" value="ENTH_VHS"/>
</dbReference>
<dbReference type="InterPro" id="IPR032337">
    <property type="entry name" value="RPRD1A/B_C"/>
</dbReference>
<dbReference type="InterPro" id="IPR047882">
    <property type="entry name" value="RPRD1B_CID"/>
</dbReference>
<dbReference type="PANTHER" id="PTHR12460">
    <property type="entry name" value="CYCLIN-DEPENDENT KINASE INHIBITOR-RELATED PROTEIN"/>
    <property type="match status" value="1"/>
</dbReference>
<dbReference type="PANTHER" id="PTHR12460:SF3">
    <property type="entry name" value="REGULATION OF NUCLEAR PRE-MRNA DOMAIN-CONTAINING PROTEIN 1B"/>
    <property type="match status" value="1"/>
</dbReference>
<dbReference type="Pfam" id="PF04818">
    <property type="entry name" value="CID"/>
    <property type="match status" value="1"/>
</dbReference>
<dbReference type="Pfam" id="PF16566">
    <property type="entry name" value="CREPT"/>
    <property type="match status" value="1"/>
</dbReference>
<dbReference type="SMART" id="SM00582">
    <property type="entry name" value="RPR"/>
    <property type="match status" value="1"/>
</dbReference>
<dbReference type="SUPFAM" id="SSF48464">
    <property type="entry name" value="ENTH/VHS domain"/>
    <property type="match status" value="1"/>
</dbReference>
<dbReference type="PROSITE" id="PS51391">
    <property type="entry name" value="CID"/>
    <property type="match status" value="1"/>
</dbReference>
<protein>
    <recommendedName>
        <fullName>Regulation of nuclear pre-mRNA domain-containing protein 1B</fullName>
    </recommendedName>
    <alternativeName>
        <fullName>Cell cycle-related and expression-elevated protein in tumor</fullName>
    </alternativeName>
</protein>
<sequence>MSSFSESALEKKLSELSNSQQSVQTLSLWLIHHRKHAGPIVSVWHRELRKAKSNRKLTFLYLANDVIQNSKRKGPEFTREFESVLVDAFSHVAREADEGCKKPLERLLNIWQERSVYGGEFIQQLKLSMEDSKSPPPKAAEEKKSLKRTFQQIQEEEDDDYPGSYSPQDPSAGPLLTEELIKALQDLENAASGDATVRQKIASLPQEVQDVSLLEKITDKEAAERLSKTVDEACLLLAEYNGRLAAELEDRRQLARMLVEYTQNQKEVLSEKEKKLEEYKQKLARVTQVRKELKSHIQSLPDLSLLPNVTGGLAPLPSAGDLFSTD</sequence>